<protein>
    <recommendedName>
        <fullName>Probable ubiquitination network signaling protein acrB</fullName>
    </recommendedName>
    <alternativeName>
        <fullName>Acriflavine resistance protein B</fullName>
    </alternativeName>
</protein>
<comment type="function">
    <text evidence="1">Component of the regulatory network controlling carbon source utilization through ubiquitination and deubiquitination involving creA, creB, creC, creD and acrB. Involved in resistance to acriflavine, and required for normal growth on a range of sole carbon sources, including fructose, cellobiose, raffinose, and starch, and reduced utilization of amino acids, including GABA and beta-alanine, as sole carbon and nitrogen sources (By similarity).</text>
</comment>
<comment type="subcellular location">
    <subcellularLocation>
        <location evidence="4">Membrane</location>
        <topology evidence="4">Multi-pass membrane protein</topology>
    </subcellularLocation>
</comment>
<comment type="similarity">
    <text evidence="4">Belongs to the acrB family.</text>
</comment>
<reference key="1">
    <citation type="journal article" date="2005" name="Nature">
        <title>Genomic sequence of the pathogenic and allergenic filamentous fungus Aspergillus fumigatus.</title>
        <authorList>
            <person name="Nierman W.C."/>
            <person name="Pain A."/>
            <person name="Anderson M.J."/>
            <person name="Wortman J.R."/>
            <person name="Kim H.S."/>
            <person name="Arroyo J."/>
            <person name="Berriman M."/>
            <person name="Abe K."/>
            <person name="Archer D.B."/>
            <person name="Bermejo C."/>
            <person name="Bennett J.W."/>
            <person name="Bowyer P."/>
            <person name="Chen D."/>
            <person name="Collins M."/>
            <person name="Coulsen R."/>
            <person name="Davies R."/>
            <person name="Dyer P.S."/>
            <person name="Farman M.L."/>
            <person name="Fedorova N."/>
            <person name="Fedorova N.D."/>
            <person name="Feldblyum T.V."/>
            <person name="Fischer R."/>
            <person name="Fosker N."/>
            <person name="Fraser A."/>
            <person name="Garcia J.L."/>
            <person name="Garcia M.J."/>
            <person name="Goble A."/>
            <person name="Goldman G.H."/>
            <person name="Gomi K."/>
            <person name="Griffith-Jones S."/>
            <person name="Gwilliam R."/>
            <person name="Haas B.J."/>
            <person name="Haas H."/>
            <person name="Harris D.E."/>
            <person name="Horiuchi H."/>
            <person name="Huang J."/>
            <person name="Humphray S."/>
            <person name="Jimenez J."/>
            <person name="Keller N."/>
            <person name="Khouri H."/>
            <person name="Kitamoto K."/>
            <person name="Kobayashi T."/>
            <person name="Konzack S."/>
            <person name="Kulkarni R."/>
            <person name="Kumagai T."/>
            <person name="Lafton A."/>
            <person name="Latge J.-P."/>
            <person name="Li W."/>
            <person name="Lord A."/>
            <person name="Lu C."/>
            <person name="Majoros W.H."/>
            <person name="May G.S."/>
            <person name="Miller B.L."/>
            <person name="Mohamoud Y."/>
            <person name="Molina M."/>
            <person name="Monod M."/>
            <person name="Mouyna I."/>
            <person name="Mulligan S."/>
            <person name="Murphy L.D."/>
            <person name="O'Neil S."/>
            <person name="Paulsen I."/>
            <person name="Penalva M.A."/>
            <person name="Pertea M."/>
            <person name="Price C."/>
            <person name="Pritchard B.L."/>
            <person name="Quail M.A."/>
            <person name="Rabbinowitsch E."/>
            <person name="Rawlins N."/>
            <person name="Rajandream M.A."/>
            <person name="Reichard U."/>
            <person name="Renauld H."/>
            <person name="Robson G.D."/>
            <person name="Rodriguez de Cordoba S."/>
            <person name="Rodriguez-Pena J.M."/>
            <person name="Ronning C.M."/>
            <person name="Rutter S."/>
            <person name="Salzberg S.L."/>
            <person name="Sanchez M."/>
            <person name="Sanchez-Ferrero J.C."/>
            <person name="Saunders D."/>
            <person name="Seeger K."/>
            <person name="Squares R."/>
            <person name="Squares S."/>
            <person name="Takeuchi M."/>
            <person name="Tekaia F."/>
            <person name="Turner G."/>
            <person name="Vazquez de Aldana C.R."/>
            <person name="Weidman J."/>
            <person name="White O."/>
            <person name="Woodward J.R."/>
            <person name="Yu J.-H."/>
            <person name="Fraser C.M."/>
            <person name="Galagan J.E."/>
            <person name="Asai K."/>
            <person name="Machida M."/>
            <person name="Hall N."/>
            <person name="Barrell B.G."/>
            <person name="Denning D.W."/>
        </authorList>
    </citation>
    <scope>NUCLEOTIDE SEQUENCE [LARGE SCALE GENOMIC DNA]</scope>
    <source>
        <strain>ATCC MYA-4609 / CBS 101355 / FGSC A1100 / Af293</strain>
    </source>
</reference>
<keyword id="KW-0175">Coiled coil</keyword>
<keyword id="KW-0472">Membrane</keyword>
<keyword id="KW-1185">Reference proteome</keyword>
<keyword id="KW-0812">Transmembrane</keyword>
<keyword id="KW-1133">Transmembrane helix</keyword>
<keyword id="KW-0833">Ubl conjugation pathway</keyword>
<organism>
    <name type="scientific">Aspergillus fumigatus (strain ATCC MYA-4609 / CBS 101355 / FGSC A1100 / Af293)</name>
    <name type="common">Neosartorya fumigata</name>
    <dbReference type="NCBI Taxonomy" id="330879"/>
    <lineage>
        <taxon>Eukaryota</taxon>
        <taxon>Fungi</taxon>
        <taxon>Dikarya</taxon>
        <taxon>Ascomycota</taxon>
        <taxon>Pezizomycotina</taxon>
        <taxon>Eurotiomycetes</taxon>
        <taxon>Eurotiomycetidae</taxon>
        <taxon>Eurotiales</taxon>
        <taxon>Aspergillaceae</taxon>
        <taxon>Aspergillus</taxon>
        <taxon>Aspergillus subgen. Fumigati</taxon>
    </lineage>
</organism>
<proteinExistence type="inferred from homology"/>
<dbReference type="EMBL" id="AAHF01000005">
    <property type="protein sequence ID" value="EAL89515.1"/>
    <property type="molecule type" value="Genomic_DNA"/>
</dbReference>
<dbReference type="RefSeq" id="XP_751553.1">
    <property type="nucleotide sequence ID" value="XM_746460.1"/>
</dbReference>
<dbReference type="SMR" id="Q4WQG9"/>
<dbReference type="STRING" id="330879.Q4WQG9"/>
<dbReference type="EnsemblFungi" id="EAL89515">
    <property type="protein sequence ID" value="EAL89515"/>
    <property type="gene ID" value="AFUA_4G12790"/>
</dbReference>
<dbReference type="GeneID" id="3508912"/>
<dbReference type="KEGG" id="afm:AFUA_4G12790"/>
<dbReference type="eggNOG" id="ENOG502QSPS">
    <property type="taxonomic scope" value="Eukaryota"/>
</dbReference>
<dbReference type="HOGENOM" id="CLU_005822_0_0_1"/>
<dbReference type="InParanoid" id="Q4WQG9"/>
<dbReference type="OMA" id="NNAFWQP"/>
<dbReference type="OrthoDB" id="4158994at2759"/>
<dbReference type="Proteomes" id="UP000002530">
    <property type="component" value="Chromosome 4"/>
</dbReference>
<dbReference type="GO" id="GO:0016020">
    <property type="term" value="C:membrane"/>
    <property type="evidence" value="ECO:0007669"/>
    <property type="project" value="UniProtKB-SubCell"/>
</dbReference>
<dbReference type="PROSITE" id="PS00589">
    <property type="entry name" value="PTS_HPR_SER"/>
    <property type="match status" value="1"/>
</dbReference>
<feature type="chain" id="PRO_0000395728" description="Probable ubiquitination network signaling protein acrB">
    <location>
        <begin position="1"/>
        <end position="1019"/>
    </location>
</feature>
<feature type="transmembrane region" description="Helical" evidence="2">
    <location>
        <begin position="163"/>
        <end position="183"/>
    </location>
</feature>
<feature type="transmembrane region" description="Helical" evidence="2">
    <location>
        <begin position="216"/>
        <end position="236"/>
    </location>
</feature>
<feature type="transmembrane region" description="Helical" evidence="2">
    <location>
        <begin position="259"/>
        <end position="279"/>
    </location>
</feature>
<feature type="region of interest" description="Disordered" evidence="3">
    <location>
        <begin position="1"/>
        <end position="94"/>
    </location>
</feature>
<feature type="region of interest" description="Disordered" evidence="3">
    <location>
        <begin position="109"/>
        <end position="143"/>
    </location>
</feature>
<feature type="region of interest" description="Disordered" evidence="3">
    <location>
        <begin position="343"/>
        <end position="371"/>
    </location>
</feature>
<feature type="region of interest" description="Disordered" evidence="3">
    <location>
        <begin position="580"/>
        <end position="603"/>
    </location>
</feature>
<feature type="region of interest" description="Disordered" evidence="3">
    <location>
        <begin position="831"/>
        <end position="855"/>
    </location>
</feature>
<feature type="region of interest" description="Disordered" evidence="3">
    <location>
        <begin position="879"/>
        <end position="905"/>
    </location>
</feature>
<feature type="region of interest" description="Disordered" evidence="3">
    <location>
        <begin position="963"/>
        <end position="1019"/>
    </location>
</feature>
<feature type="coiled-coil region" evidence="2">
    <location>
        <begin position="602"/>
        <end position="788"/>
    </location>
</feature>
<feature type="compositionally biased region" description="Polar residues" evidence="3">
    <location>
        <begin position="30"/>
        <end position="43"/>
    </location>
</feature>
<feature type="compositionally biased region" description="Low complexity" evidence="3">
    <location>
        <begin position="44"/>
        <end position="66"/>
    </location>
</feature>
<feature type="compositionally biased region" description="Polar residues" evidence="3">
    <location>
        <begin position="68"/>
        <end position="83"/>
    </location>
</feature>
<feature type="compositionally biased region" description="Polar residues" evidence="3">
    <location>
        <begin position="131"/>
        <end position="143"/>
    </location>
</feature>
<feature type="compositionally biased region" description="Polar residues" evidence="3">
    <location>
        <begin position="580"/>
        <end position="589"/>
    </location>
</feature>
<feature type="compositionally biased region" description="Gly residues" evidence="3">
    <location>
        <begin position="992"/>
        <end position="1008"/>
    </location>
</feature>
<accession>Q4WQG9</accession>
<gene>
    <name type="primary">acrB</name>
    <name type="synonym">acr2</name>
    <name type="ORF">AFUA_4G12790</name>
</gene>
<evidence type="ECO:0000250" key="1"/>
<evidence type="ECO:0000255" key="2"/>
<evidence type="ECO:0000256" key="3">
    <source>
        <dbReference type="SAM" id="MobiDB-lite"/>
    </source>
</evidence>
<evidence type="ECO:0000305" key="4"/>
<name>ACRB_ASPFU</name>
<sequence>MPRSSATARKSHSNRHENGSANTGKKVAKQKSNGHLNVNLNGGSASSSLSSSQVDLPSSRSSSDPVVPTTTAASTKLNGTPDSSKGDCNAPDHLNGYAKGNADMSYVQNDGVASQTGGDVAGPASRRTEKSATGSKRSPSNASVNPLQLASTILKSCPMYDTIAILIFLLQLPPMVLTLVQFLFASLTFLPPSGASAGSLTSNFDIFQGPAGTPSLGTMIAMDGFCLLIWGLFMWTWAQNFALDLAHVQVAITLGGGGFGKNGGVNTLCVGIVLIMHLVRSKGIQDFVIGHLLSSNIISPDMLSQYSHLLPTEFRRTEPQTSPSWLRSLLAVHILAQAGTAMARRSMAKNRTPNPPRTGKRIDTEASAGSQTQIDSAFESGASVSSYIGADGQIVTSAAHKDGRDRLLSAKKRRRQANQVRSRQPFWAALASTKITVMREYEHSRALSKTARSLPMTEDDLQGLSLDDGLVWITEIDSSTIKFAAGDFSSADDSSGSGACEAGCLGSEDMEPFYVCVNGALWATATICKVHDAPKGSSMVHWRGEISGLAPNCAYTCSFVRSDTDEEICVISVKTPANNDAEQVSSVSTPPHPSYRPSSPTTTLKNSIVNAEAKLNEKRSRLRKAKNDHKLIISKIRKELDNYNHRLHSGTDENRQKQRSLQLERNIRQTEEATALLEDQLDNLENVPEEELRKWSDQKAKYEHELGLLNSAKEELASARSAIAREVSSLETELSSAIQRRERLQSRRTRINEQYERIVSANAQGLNERERRAAEQFAREQDQAKLEATFNEQFATIGQSVQEYQLRAQQIWQQCDAIEQAIQQQHQQMLLDPGPLTPEGNLPGTNPFSESALPLGALTSTAPSSRSLLGLSFPPLKSSPLQTASSPVGASSSHPTSPVQQPSYLNFPTSPLVNASSHLDSDFVYRHRSFSNRSARSSLYGSDFMDSSRRQPFQLDLSELLADKRSPGSDSNTALNSGLRPVSSPFQRAGSRGSGSGSNGSGGSGSGSGSPSSVYGKTN</sequence>